<organism>
    <name type="scientific">Chloroherpeton thalassium (strain ATCC 35110 / GB-78)</name>
    <dbReference type="NCBI Taxonomy" id="517418"/>
    <lineage>
        <taxon>Bacteria</taxon>
        <taxon>Pseudomonadati</taxon>
        <taxon>Chlorobiota</taxon>
        <taxon>Chlorobiia</taxon>
        <taxon>Chlorobiales</taxon>
        <taxon>Chloroherpetonaceae</taxon>
        <taxon>Chloroherpeton</taxon>
    </lineage>
</organism>
<sequence>MDVAFESPYWKKFQYICGVDEVGRGPLAGPVVAAAVIFDRYFEPSGILEQIDDSKALRHETRVLLSSEIKKQALSFSIAEISPEVIDEVNILQATFLAMNQAIEQLSPIPEFLLIDGNRFKTTLPIPFETVVKGDSKVFSIAAASIIAKVHRDNFMINLAERYPEYGFAQHFGYPTKAHIEAIKMFGRSKVHRKSFKLSCLGEK</sequence>
<keyword id="KW-0963">Cytoplasm</keyword>
<keyword id="KW-0255">Endonuclease</keyword>
<keyword id="KW-0378">Hydrolase</keyword>
<keyword id="KW-0464">Manganese</keyword>
<keyword id="KW-0479">Metal-binding</keyword>
<keyword id="KW-0540">Nuclease</keyword>
<keyword id="KW-1185">Reference proteome</keyword>
<accession>B3QRP3</accession>
<evidence type="ECO:0000255" key="1">
    <source>
        <dbReference type="HAMAP-Rule" id="MF_00052"/>
    </source>
</evidence>
<evidence type="ECO:0000255" key="2">
    <source>
        <dbReference type="PROSITE-ProRule" id="PRU01319"/>
    </source>
</evidence>
<comment type="function">
    <text evidence="1">Endonuclease that specifically degrades the RNA of RNA-DNA hybrids.</text>
</comment>
<comment type="catalytic activity">
    <reaction evidence="1">
        <text>Endonucleolytic cleavage to 5'-phosphomonoester.</text>
        <dbReference type="EC" id="3.1.26.4"/>
    </reaction>
</comment>
<comment type="cofactor">
    <cofactor evidence="1">
        <name>Mn(2+)</name>
        <dbReference type="ChEBI" id="CHEBI:29035"/>
    </cofactor>
    <cofactor evidence="1">
        <name>Mg(2+)</name>
        <dbReference type="ChEBI" id="CHEBI:18420"/>
    </cofactor>
    <text evidence="1">Manganese or magnesium. Binds 1 divalent metal ion per monomer in the absence of substrate. May bind a second metal ion after substrate binding.</text>
</comment>
<comment type="subcellular location">
    <subcellularLocation>
        <location evidence="1">Cytoplasm</location>
    </subcellularLocation>
</comment>
<comment type="similarity">
    <text evidence="1">Belongs to the RNase HII family.</text>
</comment>
<feature type="chain" id="PRO_1000091615" description="Ribonuclease HII">
    <location>
        <begin position="1"/>
        <end position="204"/>
    </location>
</feature>
<feature type="domain" description="RNase H type-2" evidence="2">
    <location>
        <begin position="14"/>
        <end position="204"/>
    </location>
</feature>
<feature type="binding site" evidence="1">
    <location>
        <position position="20"/>
    </location>
    <ligand>
        <name>a divalent metal cation</name>
        <dbReference type="ChEBI" id="CHEBI:60240"/>
    </ligand>
</feature>
<feature type="binding site" evidence="1">
    <location>
        <position position="21"/>
    </location>
    <ligand>
        <name>a divalent metal cation</name>
        <dbReference type="ChEBI" id="CHEBI:60240"/>
    </ligand>
</feature>
<feature type="binding site" evidence="1">
    <location>
        <position position="116"/>
    </location>
    <ligand>
        <name>a divalent metal cation</name>
        <dbReference type="ChEBI" id="CHEBI:60240"/>
    </ligand>
</feature>
<dbReference type="EC" id="3.1.26.4" evidence="1"/>
<dbReference type="EMBL" id="CP001100">
    <property type="protein sequence ID" value="ACF13846.1"/>
    <property type="molecule type" value="Genomic_DNA"/>
</dbReference>
<dbReference type="RefSeq" id="WP_012499930.1">
    <property type="nucleotide sequence ID" value="NC_011026.1"/>
</dbReference>
<dbReference type="SMR" id="B3QRP3"/>
<dbReference type="STRING" id="517418.Ctha_1383"/>
<dbReference type="KEGG" id="cts:Ctha_1383"/>
<dbReference type="eggNOG" id="COG0164">
    <property type="taxonomic scope" value="Bacteria"/>
</dbReference>
<dbReference type="HOGENOM" id="CLU_036532_3_2_10"/>
<dbReference type="OrthoDB" id="9803420at2"/>
<dbReference type="Proteomes" id="UP000001208">
    <property type="component" value="Chromosome"/>
</dbReference>
<dbReference type="GO" id="GO:0005737">
    <property type="term" value="C:cytoplasm"/>
    <property type="evidence" value="ECO:0007669"/>
    <property type="project" value="UniProtKB-SubCell"/>
</dbReference>
<dbReference type="GO" id="GO:0032299">
    <property type="term" value="C:ribonuclease H2 complex"/>
    <property type="evidence" value="ECO:0007669"/>
    <property type="project" value="TreeGrafter"/>
</dbReference>
<dbReference type="GO" id="GO:0030145">
    <property type="term" value="F:manganese ion binding"/>
    <property type="evidence" value="ECO:0007669"/>
    <property type="project" value="UniProtKB-UniRule"/>
</dbReference>
<dbReference type="GO" id="GO:0003723">
    <property type="term" value="F:RNA binding"/>
    <property type="evidence" value="ECO:0007669"/>
    <property type="project" value="InterPro"/>
</dbReference>
<dbReference type="GO" id="GO:0004523">
    <property type="term" value="F:RNA-DNA hybrid ribonuclease activity"/>
    <property type="evidence" value="ECO:0007669"/>
    <property type="project" value="UniProtKB-UniRule"/>
</dbReference>
<dbReference type="GO" id="GO:0043137">
    <property type="term" value="P:DNA replication, removal of RNA primer"/>
    <property type="evidence" value="ECO:0007669"/>
    <property type="project" value="TreeGrafter"/>
</dbReference>
<dbReference type="GO" id="GO:0006298">
    <property type="term" value="P:mismatch repair"/>
    <property type="evidence" value="ECO:0007669"/>
    <property type="project" value="TreeGrafter"/>
</dbReference>
<dbReference type="CDD" id="cd07182">
    <property type="entry name" value="RNase_HII_bacteria_HII_like"/>
    <property type="match status" value="1"/>
</dbReference>
<dbReference type="FunFam" id="3.30.420.10:FF:000006">
    <property type="entry name" value="Ribonuclease HII"/>
    <property type="match status" value="1"/>
</dbReference>
<dbReference type="Gene3D" id="3.30.420.10">
    <property type="entry name" value="Ribonuclease H-like superfamily/Ribonuclease H"/>
    <property type="match status" value="1"/>
</dbReference>
<dbReference type="HAMAP" id="MF_00052_B">
    <property type="entry name" value="RNase_HII_B"/>
    <property type="match status" value="1"/>
</dbReference>
<dbReference type="InterPro" id="IPR022898">
    <property type="entry name" value="RNase_HII"/>
</dbReference>
<dbReference type="InterPro" id="IPR001352">
    <property type="entry name" value="RNase_HII/HIII"/>
</dbReference>
<dbReference type="InterPro" id="IPR024567">
    <property type="entry name" value="RNase_HII/HIII_dom"/>
</dbReference>
<dbReference type="InterPro" id="IPR012337">
    <property type="entry name" value="RNaseH-like_sf"/>
</dbReference>
<dbReference type="InterPro" id="IPR036397">
    <property type="entry name" value="RNaseH_sf"/>
</dbReference>
<dbReference type="NCBIfam" id="NF000594">
    <property type="entry name" value="PRK00015.1-1"/>
    <property type="match status" value="1"/>
</dbReference>
<dbReference type="NCBIfam" id="NF000595">
    <property type="entry name" value="PRK00015.1-3"/>
    <property type="match status" value="1"/>
</dbReference>
<dbReference type="PANTHER" id="PTHR10954">
    <property type="entry name" value="RIBONUCLEASE H2 SUBUNIT A"/>
    <property type="match status" value="1"/>
</dbReference>
<dbReference type="PANTHER" id="PTHR10954:SF18">
    <property type="entry name" value="RIBONUCLEASE HII"/>
    <property type="match status" value="1"/>
</dbReference>
<dbReference type="Pfam" id="PF01351">
    <property type="entry name" value="RNase_HII"/>
    <property type="match status" value="1"/>
</dbReference>
<dbReference type="SUPFAM" id="SSF53098">
    <property type="entry name" value="Ribonuclease H-like"/>
    <property type="match status" value="1"/>
</dbReference>
<dbReference type="PROSITE" id="PS51975">
    <property type="entry name" value="RNASE_H_2"/>
    <property type="match status" value="1"/>
</dbReference>
<proteinExistence type="inferred from homology"/>
<reference key="1">
    <citation type="submission" date="2008-06" db="EMBL/GenBank/DDBJ databases">
        <title>Complete sequence of Chloroherpeton thalassium ATCC 35110.</title>
        <authorList>
            <consortium name="US DOE Joint Genome Institute"/>
            <person name="Lucas S."/>
            <person name="Copeland A."/>
            <person name="Lapidus A."/>
            <person name="Glavina del Rio T."/>
            <person name="Dalin E."/>
            <person name="Tice H."/>
            <person name="Bruce D."/>
            <person name="Goodwin L."/>
            <person name="Pitluck S."/>
            <person name="Schmutz J."/>
            <person name="Larimer F."/>
            <person name="Land M."/>
            <person name="Hauser L."/>
            <person name="Kyrpides N."/>
            <person name="Mikhailova N."/>
            <person name="Liu Z."/>
            <person name="Li T."/>
            <person name="Zhao F."/>
            <person name="Overmann J."/>
            <person name="Bryant D.A."/>
            <person name="Richardson P."/>
        </authorList>
    </citation>
    <scope>NUCLEOTIDE SEQUENCE [LARGE SCALE GENOMIC DNA]</scope>
    <source>
        <strain>ATCC 35110 / GB-78</strain>
    </source>
</reference>
<protein>
    <recommendedName>
        <fullName evidence="1">Ribonuclease HII</fullName>
        <shortName evidence="1">RNase HII</shortName>
        <ecNumber evidence="1">3.1.26.4</ecNumber>
    </recommendedName>
</protein>
<name>RNH2_CHLT3</name>
<gene>
    <name evidence="1" type="primary">rnhB</name>
    <name type="ordered locus">Ctha_1383</name>
</gene>